<feature type="chain" id="PRO_0000452970" description="FAD-dependent monooxygenase nanF">
    <location>
        <begin position="1"/>
        <end position="459"/>
    </location>
</feature>
<feature type="active site" evidence="2">
    <location>
        <position position="200"/>
    </location>
</feature>
<feature type="active site" evidence="1">
    <location>
        <position position="230"/>
    </location>
</feature>
<feature type="binding site" evidence="1">
    <location>
        <position position="49"/>
    </location>
    <ligand>
        <name>FAD</name>
        <dbReference type="ChEBI" id="CHEBI:57692"/>
    </ligand>
</feature>
<feature type="binding site" evidence="1">
    <location>
        <position position="62"/>
    </location>
    <ligand>
        <name>FAD</name>
        <dbReference type="ChEBI" id="CHEBI:57692"/>
    </ligand>
</feature>
<feature type="binding site" evidence="1">
    <location>
        <position position="121"/>
    </location>
    <ligand>
        <name>FAD</name>
        <dbReference type="ChEBI" id="CHEBI:57692"/>
    </ligand>
</feature>
<feature type="binding site" evidence="1">
    <location>
        <position position="327"/>
    </location>
    <ligand>
        <name>FAD</name>
        <dbReference type="ChEBI" id="CHEBI:57692"/>
    </ligand>
</feature>
<feature type="binding site" evidence="1">
    <location>
        <position position="340"/>
    </location>
    <ligand>
        <name>FAD</name>
        <dbReference type="ChEBI" id="CHEBI:57692"/>
    </ligand>
</feature>
<keyword id="KW-0274">FAD</keyword>
<keyword id="KW-0285">Flavoprotein</keyword>
<keyword id="KW-0503">Monooxygenase</keyword>
<keyword id="KW-0560">Oxidoreductase</keyword>
<name>NANF_ASPNN</name>
<dbReference type="EC" id="1.1.1.-" evidence="3"/>
<dbReference type="EMBL" id="MT024570">
    <property type="protein sequence ID" value="QIQ51367.1"/>
    <property type="molecule type" value="Genomic_DNA"/>
</dbReference>
<dbReference type="SMR" id="A0A6G9KH61"/>
<dbReference type="OrthoDB" id="16820at2759"/>
<dbReference type="GO" id="GO:0071949">
    <property type="term" value="F:FAD binding"/>
    <property type="evidence" value="ECO:0007669"/>
    <property type="project" value="InterPro"/>
</dbReference>
<dbReference type="GO" id="GO:0004497">
    <property type="term" value="F:monooxygenase activity"/>
    <property type="evidence" value="ECO:0007669"/>
    <property type="project" value="UniProtKB-KW"/>
</dbReference>
<dbReference type="Gene3D" id="3.50.50.60">
    <property type="entry name" value="FAD/NAD(P)-binding domain"/>
    <property type="match status" value="1"/>
</dbReference>
<dbReference type="InterPro" id="IPR002938">
    <property type="entry name" value="FAD-bd"/>
</dbReference>
<dbReference type="InterPro" id="IPR050493">
    <property type="entry name" value="FAD-dep_Monooxygenase_BioMet"/>
</dbReference>
<dbReference type="InterPro" id="IPR036188">
    <property type="entry name" value="FAD/NAD-bd_sf"/>
</dbReference>
<dbReference type="PANTHER" id="PTHR13789">
    <property type="entry name" value="MONOOXYGENASE"/>
    <property type="match status" value="1"/>
</dbReference>
<dbReference type="PANTHER" id="PTHR13789:SF236">
    <property type="entry name" value="MONOOXYGENASE, PUTATIVE (AFU_ORTHOLOGUE AFUA_6G12060)-RELATED"/>
    <property type="match status" value="1"/>
</dbReference>
<dbReference type="Pfam" id="PF01494">
    <property type="entry name" value="FAD_binding_3"/>
    <property type="match status" value="1"/>
</dbReference>
<dbReference type="PRINTS" id="PR00420">
    <property type="entry name" value="RNGMNOXGNASE"/>
</dbReference>
<dbReference type="SUPFAM" id="SSF51905">
    <property type="entry name" value="FAD/NAD(P)-binding domain"/>
    <property type="match status" value="1"/>
</dbReference>
<reference key="1">
    <citation type="journal article" date="2020" name="J. Am. Chem. Soc.">
        <title>Biosynthesis of a new benzazepine alkaloid nanangelenin A from Aspergillus nanangensis involves an unusual l-kynurenine-incorporating NRPS catalyzing regioselective lactamization.</title>
        <authorList>
            <person name="Li H."/>
            <person name="Gilchrist C.L.M."/>
            <person name="Phan C.S."/>
            <person name="Lacey H.J."/>
            <person name="Vuong D."/>
            <person name="Moggach S.A."/>
            <person name="Lacey E."/>
            <person name="Piggott A.M."/>
            <person name="Chooi Y.H."/>
        </authorList>
    </citation>
    <scope>NUCLEOTIDE SEQUENCE [GENOMIC DNA]</scope>
    <scope>FUNCTION</scope>
    <scope>PATHWAY</scope>
    <source>
        <strain>CBS 146238 / FRR 6048 / MST FP2251</strain>
    </source>
</reference>
<sequence length="459" mass="49832">MTVDDSLSPAGVATPHSSGIRVVVVGLGIAGLTTAIECHRKGHTVIALEKSPVIRVLGDSLGLGSNATNVLEKWADGKILQQLKSLADDISIFEALDSAGKLYAKDDAKGFGADNGMIINRGSLATTLHEYAKMLEIDIRFGAAVTGHWEDESAAGVIINGEQRLVADCVIGCDGIHSKTREAVLTKEPTAVPSGQAVFRASFDSTSVCNDPNARWILAEKGVRDRLSQYMAEGGLALSLATGKRGQNITWQLWHEDNHNANELWSEHNSAKLENALGMIRHWPIYSKVVPILRHTPKEALTDFKLVNRAALPTWISHAGRIIIIGDAAHPVLPIVGQGGGQGIEDAATVAICLQLAGKTHISLALQAVERLRYARTSIIQSSGPKIYAGVRNPDWKAIEKDPSLIMLPRPKWIFGYDVPRDVYEQFPLVKRAIEEGSSYTPKNIPPGGRYEFLHDFKE</sequence>
<comment type="function">
    <text evidence="3">FAD-dependent monooxygenase; part of the gene cluster that mediates the biosynthesis of the benzazepine alkaloid nanangelenin A which contains an unprecedented 3,4-dihydro-1-benzazepine-2,5-dione-N-prenyl-N-acetoxy-anthranilamide scaffold (PubMed:32182055). The first step of nanangelenin biosynthesis is catalyzed by the indoleamine 2,3-dioxygenase nanC which produces N-formyl-kynurenine through the catabolism of tryptophan (PubMed:32182055). The two-module NRPS nanA then utilizes anthranilate (Ant) and L-kynurenine (L-Kyn) to assemble the dipeptide product nanangelenin B (PubMed:32182055). The first adenylation domain of nanA (A1) loads anthranilate onto the T1 domain, while A2 loads kynurenine, generated through spontaneous nonenzymatic deformylation of the nanC-supplied N-formyl-kynurenine (PubMed:32182055). The peptide bond formation between the tethered amino acids is catalyzed by the first condensation domain (C1) between anthranilate's carbonyl carbon and kynurenine's aliphatic primary amine (PubMed:32182055). The second C domain (C2) catalyzes the final cyclization event between the aromatic amine of kynurenine and the tethered carbonyl carbon, yielding nanangelenin B (PubMed:32182055). The terminal T3 domain enhances the catalytic efficiency of C2, suggesting the T2-tethered Ant-L-Kyn is transferred to T3 prior to cyclization by C2 (PubMed:32182055). Once released from nanA, nanangelenin B is then prenylated by the prenyltransferase nanD to form nanangelenin C (PubMed:32182055). Nanangelenin C is then N-hydroxylated by the FAD-dependent monooxygenase nanF and further acetylated by the acetyltransferase nanB to yield nanangelenin F (PubMed:32182055). Finally, the N-methyltransferase nanE methylates the amide nitrogen of 1-benzazepine to convert nanangelenin F into nanangelenin A (PubMed:32182055). NanE is also able to methylate most of the intermediates of the pathway such as nanangelenin B and nanangelenin C to produce nanangelenin D and nanangelenin E, respectively (PubMed:32182055).</text>
</comment>
<comment type="cofactor">
    <cofactor evidence="5">
        <name>FAD</name>
        <dbReference type="ChEBI" id="CHEBI:57692"/>
    </cofactor>
</comment>
<comment type="pathway">
    <text evidence="3">Secondary metabolite biosynthesis.</text>
</comment>
<comment type="similarity">
    <text evidence="5">Belongs to the paxM FAD-dependent monooxygenase family.</text>
</comment>
<evidence type="ECO:0000250" key="1">
    <source>
        <dbReference type="UniProtKB" id="B8M9J8"/>
    </source>
</evidence>
<evidence type="ECO:0000250" key="2">
    <source>
        <dbReference type="UniProtKB" id="L0E4H0"/>
    </source>
</evidence>
<evidence type="ECO:0000269" key="3">
    <source>
    </source>
</evidence>
<evidence type="ECO:0000303" key="4">
    <source>
    </source>
</evidence>
<evidence type="ECO:0000305" key="5"/>
<organism>
    <name type="scientific">Aspergillus nanangensis</name>
    <dbReference type="NCBI Taxonomy" id="2582783"/>
    <lineage>
        <taxon>Eukaryota</taxon>
        <taxon>Fungi</taxon>
        <taxon>Dikarya</taxon>
        <taxon>Ascomycota</taxon>
        <taxon>Pezizomycotina</taxon>
        <taxon>Eurotiomycetes</taxon>
        <taxon>Eurotiomycetidae</taxon>
        <taxon>Eurotiales</taxon>
        <taxon>Aspergillaceae</taxon>
        <taxon>Aspergillus</taxon>
        <taxon>Aspergillus subgen. Circumdati</taxon>
    </lineage>
</organism>
<accession>A0A6G9KH61</accession>
<protein>
    <recommendedName>
        <fullName evidence="4">FAD-dependent monooxygenase nanF</fullName>
        <ecNumber evidence="3">1.1.1.-</ecNumber>
    </recommendedName>
    <alternativeName>
        <fullName evidence="4">Nanangelenin A biosynthesis cluster protein F</fullName>
    </alternativeName>
</protein>
<gene>
    <name evidence="4" type="primary">nanF</name>
    <name type="ORF">FE257_013097</name>
</gene>
<proteinExistence type="inferred from homology"/>